<protein>
    <recommendedName>
        <fullName evidence="1">Ketol-acid reductoisomerase (NADP(+))</fullName>
        <shortName evidence="1">KARI</shortName>
        <ecNumber evidence="1">1.1.1.86</ecNumber>
    </recommendedName>
    <alternativeName>
        <fullName evidence="1">Acetohydroxy-acid isomeroreductase</fullName>
        <shortName evidence="1">AHIR</shortName>
    </alternativeName>
    <alternativeName>
        <fullName evidence="1">Alpha-keto-beta-hydroxylacyl reductoisomerase</fullName>
    </alternativeName>
    <alternativeName>
        <fullName evidence="1">Ketol-acid reductoisomerase type 1</fullName>
    </alternativeName>
    <alternativeName>
        <fullName evidence="1">Ketol-acid reductoisomerase type I</fullName>
    </alternativeName>
</protein>
<organism>
    <name type="scientific">Bacillus subtilis (strain 168)</name>
    <dbReference type="NCBI Taxonomy" id="224308"/>
    <lineage>
        <taxon>Bacteria</taxon>
        <taxon>Bacillati</taxon>
        <taxon>Bacillota</taxon>
        <taxon>Bacilli</taxon>
        <taxon>Bacillales</taxon>
        <taxon>Bacillaceae</taxon>
        <taxon>Bacillus</taxon>
    </lineage>
</organism>
<keyword id="KW-0028">Amino-acid biosynthesis</keyword>
<keyword id="KW-0100">Branched-chain amino acid biosynthesis</keyword>
<keyword id="KW-0903">Direct protein sequencing</keyword>
<keyword id="KW-0460">Magnesium</keyword>
<keyword id="KW-0479">Metal-binding</keyword>
<keyword id="KW-0521">NADP</keyword>
<keyword id="KW-0560">Oxidoreductase</keyword>
<keyword id="KW-1185">Reference proteome</keyword>
<proteinExistence type="evidence at protein level"/>
<name>ILVC_BACSU</name>
<comment type="function">
    <text evidence="1">Involved in the biosynthesis of branched-chain amino acids (BCAA). Catalyzes an alkyl-migration followed by a ketol-acid reduction of (S)-2-acetolactate (S2AL) to yield (R)-2,3-dihydroxy-isovalerate. In the isomerase reaction, S2AL is rearranged via a Mg-dependent methyl migration to produce 3-hydroxy-3-methyl-2-ketobutyrate (HMKB). In the reductase reaction, this 2-ketoacid undergoes a metal-dependent reduction by NADPH to yield (R)-2,3-dihydroxy-isovalerate.</text>
</comment>
<comment type="catalytic activity">
    <reaction evidence="1">
        <text>(2R)-2,3-dihydroxy-3-methylbutanoate + NADP(+) = (2S)-2-acetolactate + NADPH + H(+)</text>
        <dbReference type="Rhea" id="RHEA:22068"/>
        <dbReference type="ChEBI" id="CHEBI:15378"/>
        <dbReference type="ChEBI" id="CHEBI:49072"/>
        <dbReference type="ChEBI" id="CHEBI:57783"/>
        <dbReference type="ChEBI" id="CHEBI:58349"/>
        <dbReference type="ChEBI" id="CHEBI:58476"/>
        <dbReference type="EC" id="1.1.1.86"/>
    </reaction>
</comment>
<comment type="catalytic activity">
    <reaction evidence="1">
        <text>(2R,3R)-2,3-dihydroxy-3-methylpentanoate + NADP(+) = (S)-2-ethyl-2-hydroxy-3-oxobutanoate + NADPH + H(+)</text>
        <dbReference type="Rhea" id="RHEA:13493"/>
        <dbReference type="ChEBI" id="CHEBI:15378"/>
        <dbReference type="ChEBI" id="CHEBI:49256"/>
        <dbReference type="ChEBI" id="CHEBI:49258"/>
        <dbReference type="ChEBI" id="CHEBI:57783"/>
        <dbReference type="ChEBI" id="CHEBI:58349"/>
        <dbReference type="EC" id="1.1.1.86"/>
    </reaction>
</comment>
<comment type="cofactor">
    <cofactor evidence="1">
        <name>Mg(2+)</name>
        <dbReference type="ChEBI" id="CHEBI:18420"/>
    </cofactor>
    <text evidence="1">Binds 2 magnesium ions per subunit.</text>
</comment>
<comment type="pathway">
    <text evidence="1">Amino-acid biosynthesis; L-isoleucine biosynthesis; L-isoleucine from 2-oxobutanoate: step 2/4.</text>
</comment>
<comment type="pathway">
    <text evidence="1">Amino-acid biosynthesis; L-valine biosynthesis; L-valine from pyruvate: step 2/4.</text>
</comment>
<comment type="similarity">
    <text evidence="1">Belongs to the ketol-acid reductoisomerase family.</text>
</comment>
<sequence length="342" mass="37458">MVKVYYNGDIKENVLAGKTVAVIGYGSQGHAHALNLKESGVDVIVGVRQGKSFTQAQEDGHKVFSVKEAAAQAEIIMVLLPDEQQQKVYEAEIKDELTAGKSLVFAHGFNVHFHQIVPPADVDVFLVAPKGPGHLVRRTYEQGAGVPALFAIYQDVTGEARDKALAYAKGIGGARAGVLETTFKEETETDLFGEQAVLCGGLSALVKAGFETLTEAGYQPELAYFECLHELKLIVDLMYEEGLAGMRYSISDTAQWGDFVSGPRVVDAKVKESMKEVLKDIQNGTFAKEWIVENQVNRPRFNAINASENEHQIEVVGRKLREMMPFVKQGKKKEAVVSVAQN</sequence>
<feature type="chain" id="PRO_0000151277" description="Ketol-acid reductoisomerase (NADP(+))">
    <location>
        <begin position="1"/>
        <end position="342"/>
    </location>
</feature>
<feature type="domain" description="KARI N-terminal Rossmann" evidence="2">
    <location>
        <begin position="2"/>
        <end position="181"/>
    </location>
</feature>
<feature type="domain" description="KARI C-terminal knotted" evidence="3">
    <location>
        <begin position="182"/>
        <end position="327"/>
    </location>
</feature>
<feature type="active site" evidence="1">
    <location>
        <position position="107"/>
    </location>
</feature>
<feature type="binding site" evidence="1">
    <location>
        <begin position="25"/>
        <end position="28"/>
    </location>
    <ligand>
        <name>NADP(+)</name>
        <dbReference type="ChEBI" id="CHEBI:58349"/>
    </ligand>
</feature>
<feature type="binding site" evidence="1">
    <location>
        <position position="48"/>
    </location>
    <ligand>
        <name>NADP(+)</name>
        <dbReference type="ChEBI" id="CHEBI:58349"/>
    </ligand>
</feature>
<feature type="binding site" evidence="1">
    <location>
        <position position="52"/>
    </location>
    <ligand>
        <name>NADP(+)</name>
        <dbReference type="ChEBI" id="CHEBI:58349"/>
    </ligand>
</feature>
<feature type="binding site" evidence="1">
    <location>
        <begin position="82"/>
        <end position="85"/>
    </location>
    <ligand>
        <name>NADP(+)</name>
        <dbReference type="ChEBI" id="CHEBI:58349"/>
    </ligand>
</feature>
<feature type="binding site" evidence="1">
    <location>
        <position position="133"/>
    </location>
    <ligand>
        <name>NADP(+)</name>
        <dbReference type="ChEBI" id="CHEBI:58349"/>
    </ligand>
</feature>
<feature type="binding site" evidence="1">
    <location>
        <position position="190"/>
    </location>
    <ligand>
        <name>Mg(2+)</name>
        <dbReference type="ChEBI" id="CHEBI:18420"/>
        <label>1</label>
    </ligand>
</feature>
<feature type="binding site" evidence="1">
    <location>
        <position position="190"/>
    </location>
    <ligand>
        <name>Mg(2+)</name>
        <dbReference type="ChEBI" id="CHEBI:18420"/>
        <label>2</label>
    </ligand>
</feature>
<feature type="binding site" evidence="1">
    <location>
        <position position="194"/>
    </location>
    <ligand>
        <name>Mg(2+)</name>
        <dbReference type="ChEBI" id="CHEBI:18420"/>
        <label>1</label>
    </ligand>
</feature>
<feature type="binding site" evidence="1">
    <location>
        <position position="226"/>
    </location>
    <ligand>
        <name>Mg(2+)</name>
        <dbReference type="ChEBI" id="CHEBI:18420"/>
        <label>2</label>
    </ligand>
</feature>
<feature type="binding site" evidence="1">
    <location>
        <position position="230"/>
    </location>
    <ligand>
        <name>Mg(2+)</name>
        <dbReference type="ChEBI" id="CHEBI:18420"/>
        <label>2</label>
    </ligand>
</feature>
<feature type="binding site" evidence="1">
    <location>
        <position position="251"/>
    </location>
    <ligand>
        <name>substrate</name>
    </ligand>
</feature>
<gene>
    <name evidence="1" type="primary">ilvC</name>
    <name type="ordered locus">BSU28290</name>
</gene>
<dbReference type="EC" id="1.1.1.86" evidence="1"/>
<dbReference type="EMBL" id="L03181">
    <property type="protein sequence ID" value="AAA22548.1"/>
    <property type="molecule type" value="Genomic_DNA"/>
</dbReference>
<dbReference type="EMBL" id="Z75208">
    <property type="protein sequence ID" value="CAA99563.1"/>
    <property type="molecule type" value="Genomic_DNA"/>
</dbReference>
<dbReference type="EMBL" id="AL009126">
    <property type="protein sequence ID" value="CAB14789.1"/>
    <property type="molecule type" value="Genomic_DNA"/>
</dbReference>
<dbReference type="PIR" id="C69644">
    <property type="entry name" value="C69644"/>
</dbReference>
<dbReference type="RefSeq" id="NP_390707.1">
    <property type="nucleotide sequence ID" value="NC_000964.3"/>
</dbReference>
<dbReference type="RefSeq" id="WP_003222549.1">
    <property type="nucleotide sequence ID" value="NZ_OZ025638.1"/>
</dbReference>
<dbReference type="SMR" id="P37253"/>
<dbReference type="FunCoup" id="P37253">
    <property type="interactions" value="635"/>
</dbReference>
<dbReference type="IntAct" id="P37253">
    <property type="interactions" value="1"/>
</dbReference>
<dbReference type="MINT" id="P37253"/>
<dbReference type="STRING" id="224308.BSU28290"/>
<dbReference type="PaxDb" id="224308-BSU28290"/>
<dbReference type="EnsemblBacteria" id="CAB14789">
    <property type="protein sequence ID" value="CAB14789"/>
    <property type="gene ID" value="BSU_28290"/>
</dbReference>
<dbReference type="GeneID" id="937475"/>
<dbReference type="KEGG" id="bsu:BSU28290"/>
<dbReference type="PATRIC" id="fig|224308.179.peg.3073"/>
<dbReference type="eggNOG" id="COG0059">
    <property type="taxonomic scope" value="Bacteria"/>
</dbReference>
<dbReference type="InParanoid" id="P37253"/>
<dbReference type="OrthoDB" id="9804088at2"/>
<dbReference type="PhylomeDB" id="P37253"/>
<dbReference type="BioCyc" id="BSUB:BSU28290-MONOMER"/>
<dbReference type="UniPathway" id="UPA00047">
    <property type="reaction ID" value="UER00056"/>
</dbReference>
<dbReference type="UniPathway" id="UPA00049">
    <property type="reaction ID" value="UER00060"/>
</dbReference>
<dbReference type="Proteomes" id="UP000001570">
    <property type="component" value="Chromosome"/>
</dbReference>
<dbReference type="GO" id="GO:0005829">
    <property type="term" value="C:cytosol"/>
    <property type="evidence" value="ECO:0000318"/>
    <property type="project" value="GO_Central"/>
</dbReference>
<dbReference type="GO" id="GO:0004455">
    <property type="term" value="F:ketol-acid reductoisomerase activity"/>
    <property type="evidence" value="ECO:0000318"/>
    <property type="project" value="GO_Central"/>
</dbReference>
<dbReference type="GO" id="GO:0000287">
    <property type="term" value="F:magnesium ion binding"/>
    <property type="evidence" value="ECO:0007669"/>
    <property type="project" value="UniProtKB-UniRule"/>
</dbReference>
<dbReference type="GO" id="GO:0050661">
    <property type="term" value="F:NADP binding"/>
    <property type="evidence" value="ECO:0007669"/>
    <property type="project" value="InterPro"/>
</dbReference>
<dbReference type="GO" id="GO:0009097">
    <property type="term" value="P:isoleucine biosynthetic process"/>
    <property type="evidence" value="ECO:0000318"/>
    <property type="project" value="GO_Central"/>
</dbReference>
<dbReference type="GO" id="GO:0009099">
    <property type="term" value="P:L-valine biosynthetic process"/>
    <property type="evidence" value="ECO:0000318"/>
    <property type="project" value="GO_Central"/>
</dbReference>
<dbReference type="FunFam" id="3.40.50.720:FF:000023">
    <property type="entry name" value="Ketol-acid reductoisomerase (NADP(+))"/>
    <property type="match status" value="1"/>
</dbReference>
<dbReference type="Gene3D" id="6.10.240.10">
    <property type="match status" value="1"/>
</dbReference>
<dbReference type="Gene3D" id="3.40.50.720">
    <property type="entry name" value="NAD(P)-binding Rossmann-like Domain"/>
    <property type="match status" value="1"/>
</dbReference>
<dbReference type="HAMAP" id="MF_00435">
    <property type="entry name" value="IlvC"/>
    <property type="match status" value="1"/>
</dbReference>
<dbReference type="InterPro" id="IPR008927">
    <property type="entry name" value="6-PGluconate_DH-like_C_sf"/>
</dbReference>
<dbReference type="InterPro" id="IPR013023">
    <property type="entry name" value="KARI"/>
</dbReference>
<dbReference type="InterPro" id="IPR000506">
    <property type="entry name" value="KARI_C"/>
</dbReference>
<dbReference type="InterPro" id="IPR013116">
    <property type="entry name" value="KARI_N"/>
</dbReference>
<dbReference type="InterPro" id="IPR014359">
    <property type="entry name" value="KARI_prok"/>
</dbReference>
<dbReference type="InterPro" id="IPR036291">
    <property type="entry name" value="NAD(P)-bd_dom_sf"/>
</dbReference>
<dbReference type="NCBIfam" id="TIGR00465">
    <property type="entry name" value="ilvC"/>
    <property type="match status" value="1"/>
</dbReference>
<dbReference type="NCBIfam" id="NF004017">
    <property type="entry name" value="PRK05479.1"/>
    <property type="match status" value="1"/>
</dbReference>
<dbReference type="NCBIfam" id="NF009940">
    <property type="entry name" value="PRK13403.1"/>
    <property type="match status" value="1"/>
</dbReference>
<dbReference type="PANTHER" id="PTHR21371">
    <property type="entry name" value="KETOL-ACID REDUCTOISOMERASE, MITOCHONDRIAL"/>
    <property type="match status" value="1"/>
</dbReference>
<dbReference type="PANTHER" id="PTHR21371:SF1">
    <property type="entry name" value="KETOL-ACID REDUCTOISOMERASE, MITOCHONDRIAL"/>
    <property type="match status" value="1"/>
</dbReference>
<dbReference type="Pfam" id="PF01450">
    <property type="entry name" value="KARI_C"/>
    <property type="match status" value="1"/>
</dbReference>
<dbReference type="Pfam" id="PF07991">
    <property type="entry name" value="KARI_N"/>
    <property type="match status" value="1"/>
</dbReference>
<dbReference type="PIRSF" id="PIRSF000116">
    <property type="entry name" value="IlvC_gammaproteo"/>
    <property type="match status" value="1"/>
</dbReference>
<dbReference type="SUPFAM" id="SSF48179">
    <property type="entry name" value="6-phosphogluconate dehydrogenase C-terminal domain-like"/>
    <property type="match status" value="1"/>
</dbReference>
<dbReference type="SUPFAM" id="SSF51735">
    <property type="entry name" value="NAD(P)-binding Rossmann-fold domains"/>
    <property type="match status" value="1"/>
</dbReference>
<dbReference type="PROSITE" id="PS51851">
    <property type="entry name" value="KARI_C"/>
    <property type="match status" value="1"/>
</dbReference>
<dbReference type="PROSITE" id="PS51850">
    <property type="entry name" value="KARI_N"/>
    <property type="match status" value="1"/>
</dbReference>
<accession>P37253</accession>
<evidence type="ECO:0000255" key="1">
    <source>
        <dbReference type="HAMAP-Rule" id="MF_00435"/>
    </source>
</evidence>
<evidence type="ECO:0000255" key="2">
    <source>
        <dbReference type="PROSITE-ProRule" id="PRU01197"/>
    </source>
</evidence>
<evidence type="ECO:0000255" key="3">
    <source>
        <dbReference type="PROSITE-ProRule" id="PRU01198"/>
    </source>
</evidence>
<reference key="1">
    <citation type="submission" date="1992-09" db="EMBL/GenBank/DDBJ databases">
        <title>The ilv-leu operon of Bacillus subtilis: sequences of the ilvB, ilvN and ilvC genes, and the control of transcription.</title>
        <authorList>
            <person name="Vandeyar M.A."/>
            <person name="Vander Horn P.B."/>
            <person name="Rafael J.A."/>
            <person name="Grandoni J.A."/>
            <person name="Zahler S.A."/>
        </authorList>
    </citation>
    <scope>NUCLEOTIDE SEQUENCE [GENOMIC DNA]</scope>
</reference>
<reference key="2">
    <citation type="journal article" date="1996" name="Microbiology">
        <title>The dnaB-pheA (256 degrees-240 degrees) region of the Bacillus subtilis chromosome containing genes responsible for stress responses, the utilization of plant cell walls and primary metabolism.</title>
        <authorList>
            <person name="Wipat A."/>
            <person name="Carter N."/>
            <person name="Brignell C.S."/>
            <person name="Guy J.B."/>
            <person name="Piper K."/>
            <person name="Sanders J."/>
            <person name="Emmerson P.T."/>
            <person name="Harwood C.R."/>
        </authorList>
    </citation>
    <scope>NUCLEOTIDE SEQUENCE [GENOMIC DNA]</scope>
    <source>
        <strain>168</strain>
    </source>
</reference>
<reference key="3">
    <citation type="journal article" date="1997" name="Nature">
        <title>The complete genome sequence of the Gram-positive bacterium Bacillus subtilis.</title>
        <authorList>
            <person name="Kunst F."/>
            <person name="Ogasawara N."/>
            <person name="Moszer I."/>
            <person name="Albertini A.M."/>
            <person name="Alloni G."/>
            <person name="Azevedo V."/>
            <person name="Bertero M.G."/>
            <person name="Bessieres P."/>
            <person name="Bolotin A."/>
            <person name="Borchert S."/>
            <person name="Borriss R."/>
            <person name="Boursier L."/>
            <person name="Brans A."/>
            <person name="Braun M."/>
            <person name="Brignell S.C."/>
            <person name="Bron S."/>
            <person name="Brouillet S."/>
            <person name="Bruschi C.V."/>
            <person name="Caldwell B."/>
            <person name="Capuano V."/>
            <person name="Carter N.M."/>
            <person name="Choi S.-K."/>
            <person name="Codani J.-J."/>
            <person name="Connerton I.F."/>
            <person name="Cummings N.J."/>
            <person name="Daniel R.A."/>
            <person name="Denizot F."/>
            <person name="Devine K.M."/>
            <person name="Duesterhoeft A."/>
            <person name="Ehrlich S.D."/>
            <person name="Emmerson P.T."/>
            <person name="Entian K.-D."/>
            <person name="Errington J."/>
            <person name="Fabret C."/>
            <person name="Ferrari E."/>
            <person name="Foulger D."/>
            <person name="Fritz C."/>
            <person name="Fujita M."/>
            <person name="Fujita Y."/>
            <person name="Fuma S."/>
            <person name="Galizzi A."/>
            <person name="Galleron N."/>
            <person name="Ghim S.-Y."/>
            <person name="Glaser P."/>
            <person name="Goffeau A."/>
            <person name="Golightly E.J."/>
            <person name="Grandi G."/>
            <person name="Guiseppi G."/>
            <person name="Guy B.J."/>
            <person name="Haga K."/>
            <person name="Haiech J."/>
            <person name="Harwood C.R."/>
            <person name="Henaut A."/>
            <person name="Hilbert H."/>
            <person name="Holsappel S."/>
            <person name="Hosono S."/>
            <person name="Hullo M.-F."/>
            <person name="Itaya M."/>
            <person name="Jones L.-M."/>
            <person name="Joris B."/>
            <person name="Karamata D."/>
            <person name="Kasahara Y."/>
            <person name="Klaerr-Blanchard M."/>
            <person name="Klein C."/>
            <person name="Kobayashi Y."/>
            <person name="Koetter P."/>
            <person name="Koningstein G."/>
            <person name="Krogh S."/>
            <person name="Kumano M."/>
            <person name="Kurita K."/>
            <person name="Lapidus A."/>
            <person name="Lardinois S."/>
            <person name="Lauber J."/>
            <person name="Lazarevic V."/>
            <person name="Lee S.-M."/>
            <person name="Levine A."/>
            <person name="Liu H."/>
            <person name="Masuda S."/>
            <person name="Mauel C."/>
            <person name="Medigue C."/>
            <person name="Medina N."/>
            <person name="Mellado R.P."/>
            <person name="Mizuno M."/>
            <person name="Moestl D."/>
            <person name="Nakai S."/>
            <person name="Noback M."/>
            <person name="Noone D."/>
            <person name="O'Reilly M."/>
            <person name="Ogawa K."/>
            <person name="Ogiwara A."/>
            <person name="Oudega B."/>
            <person name="Park S.-H."/>
            <person name="Parro V."/>
            <person name="Pohl T.M."/>
            <person name="Portetelle D."/>
            <person name="Porwollik S."/>
            <person name="Prescott A.M."/>
            <person name="Presecan E."/>
            <person name="Pujic P."/>
            <person name="Purnelle B."/>
            <person name="Rapoport G."/>
            <person name="Rey M."/>
            <person name="Reynolds S."/>
            <person name="Rieger M."/>
            <person name="Rivolta C."/>
            <person name="Rocha E."/>
            <person name="Roche B."/>
            <person name="Rose M."/>
            <person name="Sadaie Y."/>
            <person name="Sato T."/>
            <person name="Scanlan E."/>
            <person name="Schleich S."/>
            <person name="Schroeter R."/>
            <person name="Scoffone F."/>
            <person name="Sekiguchi J."/>
            <person name="Sekowska A."/>
            <person name="Seror S.J."/>
            <person name="Serror P."/>
            <person name="Shin B.-S."/>
            <person name="Soldo B."/>
            <person name="Sorokin A."/>
            <person name="Tacconi E."/>
            <person name="Takagi T."/>
            <person name="Takahashi H."/>
            <person name="Takemaru K."/>
            <person name="Takeuchi M."/>
            <person name="Tamakoshi A."/>
            <person name="Tanaka T."/>
            <person name="Terpstra P."/>
            <person name="Tognoni A."/>
            <person name="Tosato V."/>
            <person name="Uchiyama S."/>
            <person name="Vandenbol M."/>
            <person name="Vannier F."/>
            <person name="Vassarotti A."/>
            <person name="Viari A."/>
            <person name="Wambutt R."/>
            <person name="Wedler E."/>
            <person name="Wedler H."/>
            <person name="Weitzenegger T."/>
            <person name="Winters P."/>
            <person name="Wipat A."/>
            <person name="Yamamoto H."/>
            <person name="Yamane K."/>
            <person name="Yasumoto K."/>
            <person name="Yata K."/>
            <person name="Yoshida K."/>
            <person name="Yoshikawa H.-F."/>
            <person name="Zumstein E."/>
            <person name="Yoshikawa H."/>
            <person name="Danchin A."/>
        </authorList>
    </citation>
    <scope>NUCLEOTIDE SEQUENCE [LARGE SCALE GENOMIC DNA]</scope>
    <source>
        <strain>168</strain>
    </source>
</reference>
<reference key="4">
    <citation type="journal article" date="1996" name="J. Bacteriol.">
        <title>Cold shock stress-induced proteins in Bacillus subtilis.</title>
        <authorList>
            <person name="Graumann P."/>
            <person name="Schroeder K."/>
            <person name="Schmid R."/>
            <person name="Marahiel M.A."/>
        </authorList>
    </citation>
    <scope>PROTEIN SEQUENCE OF 17-31</scope>
    <source>
        <strain>168 / JH642</strain>
    </source>
</reference>